<accession>Q047M8</accession>
<sequence>MPKRTDIHKIMVIGSGPIIIGQAAEFDYSGTQACLALRDEGYEVVLVNSNPATIMTDTTIADKVYIEPLTVDSVSRIIRQEYPDAILPTLGGQVGLNMALALAKTGILDELHIELLGTKLASIEQAEDREKFKELCQKLGEPVPPSKTVKIVEDALAFGDEIGYPIIVRPAFTMGGTGGGICHNHDELAEIAKNGLELSPVTECLIEKSIAGYKEIEFEVMRDSSDNAMIVCCMENFDPVGIHTGDSIVFSPSQTLSDKEYQMLRDCSLKLIRALKIEGGCNVQLALDPNSLDYDVIEVNPRVSRSSALASKATGYPIAKMAAKIAIGMTLDEIKNPVTGTTYAEFEPALDYVVCKIPRFPFDKFPKADRVLGTQMKATGEVMAIGRTAEEAMQKAVQSLEIDEKDLYSAKAHKASDDEIEQKLVRPQDDRLFYLAEAFRRGYSLEDVHELTKINFYFLDVVKHMVEMEKEIEANPDDLDVLRLAKKYGFSDQTIAKLWHEYPDQVRDLRKANGIVPVYKMVDTCAAEFESTTPYFYSTYDGENESRKSGKKSVIVIGSGPIRIGQGVEFDYATVHSVKALQKMGYEAIVINSNPETVSTDFSVSDKLYFEPLTLEDVLNVCDLEQPEGVIVQFGGQTSINLAAGLERHGVKILGTTVKDLDRAEDREEFDQIIKSLHLHQPQGLTATTHEGVMKAADQLGYPVLVRPSYVLGGKAMEIVYSKDELEEYLHDHADIAEDHPILVDDYLDGRECDVDAISDGKTVLLPGIMEHIEHAGVHSGDSMAVYPPQTFSDEVEEKITDVTKKLALALNCKGIMNIQFIVRDGDVYVIEVNPRASRTVPFLSKITGIEMAQVATRVIMGESLEQQGYADGLAPEPEMISVKAPVFSFSKLADVDSYLGPEMKSTGEVMGSDHTFAKALYKAFAGAKMQLPENGNVLLTIEDRDKEKILPIAKRFARIGYRIFATKGTANFLKKNDLHVELVTKVHEDEQADDNILNELRDGKIDLVINTMGHDIEKNSDGFIIRQMAIQQNVPLLTALDTADALLKSLENRSFATDALK</sequence>
<feature type="chain" id="PRO_1000066354" description="Carbamoyl phosphate synthase large chain">
    <location>
        <begin position="1"/>
        <end position="1062"/>
    </location>
</feature>
<feature type="domain" description="ATP-grasp 1" evidence="1">
    <location>
        <begin position="133"/>
        <end position="327"/>
    </location>
</feature>
<feature type="domain" description="ATP-grasp 2" evidence="1">
    <location>
        <begin position="671"/>
        <end position="861"/>
    </location>
</feature>
<feature type="domain" description="MGS-like" evidence="1">
    <location>
        <begin position="930"/>
        <end position="1062"/>
    </location>
</feature>
<feature type="region of interest" description="Carboxyphosphate synthetic domain" evidence="1">
    <location>
        <begin position="1"/>
        <end position="401"/>
    </location>
</feature>
<feature type="region of interest" description="Oligomerization domain" evidence="1">
    <location>
        <begin position="402"/>
        <end position="546"/>
    </location>
</feature>
<feature type="region of interest" description="Carbamoyl phosphate synthetic domain" evidence="1">
    <location>
        <begin position="547"/>
        <end position="929"/>
    </location>
</feature>
<feature type="region of interest" description="Allosteric domain" evidence="1">
    <location>
        <begin position="930"/>
        <end position="1062"/>
    </location>
</feature>
<feature type="binding site" evidence="1">
    <location>
        <position position="129"/>
    </location>
    <ligand>
        <name>ATP</name>
        <dbReference type="ChEBI" id="CHEBI:30616"/>
        <label>1</label>
    </ligand>
</feature>
<feature type="binding site" evidence="1">
    <location>
        <position position="169"/>
    </location>
    <ligand>
        <name>ATP</name>
        <dbReference type="ChEBI" id="CHEBI:30616"/>
        <label>1</label>
    </ligand>
</feature>
<feature type="binding site" evidence="1">
    <location>
        <position position="175"/>
    </location>
    <ligand>
        <name>ATP</name>
        <dbReference type="ChEBI" id="CHEBI:30616"/>
        <label>1</label>
    </ligand>
</feature>
<feature type="binding site" evidence="1">
    <location>
        <position position="176"/>
    </location>
    <ligand>
        <name>ATP</name>
        <dbReference type="ChEBI" id="CHEBI:30616"/>
        <label>1</label>
    </ligand>
</feature>
<feature type="binding site" evidence="1">
    <location>
        <position position="208"/>
    </location>
    <ligand>
        <name>ATP</name>
        <dbReference type="ChEBI" id="CHEBI:30616"/>
        <label>1</label>
    </ligand>
</feature>
<feature type="binding site" evidence="1">
    <location>
        <position position="210"/>
    </location>
    <ligand>
        <name>ATP</name>
        <dbReference type="ChEBI" id="CHEBI:30616"/>
        <label>1</label>
    </ligand>
</feature>
<feature type="binding site" evidence="1">
    <location>
        <position position="215"/>
    </location>
    <ligand>
        <name>ATP</name>
        <dbReference type="ChEBI" id="CHEBI:30616"/>
        <label>1</label>
    </ligand>
</feature>
<feature type="binding site" evidence="1">
    <location>
        <position position="241"/>
    </location>
    <ligand>
        <name>ATP</name>
        <dbReference type="ChEBI" id="CHEBI:30616"/>
        <label>1</label>
    </ligand>
</feature>
<feature type="binding site" evidence="1">
    <location>
        <position position="242"/>
    </location>
    <ligand>
        <name>ATP</name>
        <dbReference type="ChEBI" id="CHEBI:30616"/>
        <label>1</label>
    </ligand>
</feature>
<feature type="binding site" evidence="1">
    <location>
        <position position="243"/>
    </location>
    <ligand>
        <name>ATP</name>
        <dbReference type="ChEBI" id="CHEBI:30616"/>
        <label>1</label>
    </ligand>
</feature>
<feature type="binding site" evidence="1">
    <location>
        <position position="284"/>
    </location>
    <ligand>
        <name>ATP</name>
        <dbReference type="ChEBI" id="CHEBI:30616"/>
        <label>1</label>
    </ligand>
</feature>
<feature type="binding site" evidence="1">
    <location>
        <position position="284"/>
    </location>
    <ligand>
        <name>Mg(2+)</name>
        <dbReference type="ChEBI" id="CHEBI:18420"/>
        <label>1</label>
    </ligand>
</feature>
<feature type="binding site" evidence="1">
    <location>
        <position position="284"/>
    </location>
    <ligand>
        <name>Mn(2+)</name>
        <dbReference type="ChEBI" id="CHEBI:29035"/>
        <label>1</label>
    </ligand>
</feature>
<feature type="binding site" evidence="1">
    <location>
        <position position="298"/>
    </location>
    <ligand>
        <name>ATP</name>
        <dbReference type="ChEBI" id="CHEBI:30616"/>
        <label>1</label>
    </ligand>
</feature>
<feature type="binding site" evidence="1">
    <location>
        <position position="298"/>
    </location>
    <ligand>
        <name>Mg(2+)</name>
        <dbReference type="ChEBI" id="CHEBI:18420"/>
        <label>1</label>
    </ligand>
</feature>
<feature type="binding site" evidence="1">
    <location>
        <position position="298"/>
    </location>
    <ligand>
        <name>Mg(2+)</name>
        <dbReference type="ChEBI" id="CHEBI:18420"/>
        <label>2</label>
    </ligand>
</feature>
<feature type="binding site" evidence="1">
    <location>
        <position position="298"/>
    </location>
    <ligand>
        <name>Mn(2+)</name>
        <dbReference type="ChEBI" id="CHEBI:29035"/>
        <label>1</label>
    </ligand>
</feature>
<feature type="binding site" evidence="1">
    <location>
        <position position="298"/>
    </location>
    <ligand>
        <name>Mn(2+)</name>
        <dbReference type="ChEBI" id="CHEBI:29035"/>
        <label>2</label>
    </ligand>
</feature>
<feature type="binding site" evidence="1">
    <location>
        <position position="300"/>
    </location>
    <ligand>
        <name>Mg(2+)</name>
        <dbReference type="ChEBI" id="CHEBI:18420"/>
        <label>2</label>
    </ligand>
</feature>
<feature type="binding site" evidence="1">
    <location>
        <position position="300"/>
    </location>
    <ligand>
        <name>Mn(2+)</name>
        <dbReference type="ChEBI" id="CHEBI:29035"/>
        <label>2</label>
    </ligand>
</feature>
<feature type="binding site" evidence="1">
    <location>
        <position position="707"/>
    </location>
    <ligand>
        <name>ATP</name>
        <dbReference type="ChEBI" id="CHEBI:30616"/>
        <label>2</label>
    </ligand>
</feature>
<feature type="binding site" evidence="1">
    <location>
        <position position="746"/>
    </location>
    <ligand>
        <name>ATP</name>
        <dbReference type="ChEBI" id="CHEBI:30616"/>
        <label>2</label>
    </ligand>
</feature>
<feature type="binding site" evidence="1">
    <location>
        <position position="748"/>
    </location>
    <ligand>
        <name>ATP</name>
        <dbReference type="ChEBI" id="CHEBI:30616"/>
        <label>2</label>
    </ligand>
</feature>
<feature type="binding site" evidence="1">
    <location>
        <position position="752"/>
    </location>
    <ligand>
        <name>ATP</name>
        <dbReference type="ChEBI" id="CHEBI:30616"/>
        <label>2</label>
    </ligand>
</feature>
<feature type="binding site" evidence="1">
    <location>
        <position position="777"/>
    </location>
    <ligand>
        <name>ATP</name>
        <dbReference type="ChEBI" id="CHEBI:30616"/>
        <label>2</label>
    </ligand>
</feature>
<feature type="binding site" evidence="1">
    <location>
        <position position="778"/>
    </location>
    <ligand>
        <name>ATP</name>
        <dbReference type="ChEBI" id="CHEBI:30616"/>
        <label>2</label>
    </ligand>
</feature>
<feature type="binding site" evidence="1">
    <location>
        <position position="779"/>
    </location>
    <ligand>
        <name>ATP</name>
        <dbReference type="ChEBI" id="CHEBI:30616"/>
        <label>2</label>
    </ligand>
</feature>
<feature type="binding site" evidence="1">
    <location>
        <position position="780"/>
    </location>
    <ligand>
        <name>ATP</name>
        <dbReference type="ChEBI" id="CHEBI:30616"/>
        <label>2</label>
    </ligand>
</feature>
<feature type="binding site" evidence="1">
    <location>
        <position position="820"/>
    </location>
    <ligand>
        <name>ATP</name>
        <dbReference type="ChEBI" id="CHEBI:30616"/>
        <label>2</label>
    </ligand>
</feature>
<feature type="binding site" evidence="1">
    <location>
        <position position="820"/>
    </location>
    <ligand>
        <name>Mg(2+)</name>
        <dbReference type="ChEBI" id="CHEBI:18420"/>
        <label>3</label>
    </ligand>
</feature>
<feature type="binding site" evidence="1">
    <location>
        <position position="820"/>
    </location>
    <ligand>
        <name>Mn(2+)</name>
        <dbReference type="ChEBI" id="CHEBI:29035"/>
        <label>3</label>
    </ligand>
</feature>
<feature type="binding site" evidence="1">
    <location>
        <position position="832"/>
    </location>
    <ligand>
        <name>ATP</name>
        <dbReference type="ChEBI" id="CHEBI:30616"/>
        <label>2</label>
    </ligand>
</feature>
<feature type="binding site" evidence="1">
    <location>
        <position position="832"/>
    </location>
    <ligand>
        <name>Mg(2+)</name>
        <dbReference type="ChEBI" id="CHEBI:18420"/>
        <label>3</label>
    </ligand>
</feature>
<feature type="binding site" evidence="1">
    <location>
        <position position="832"/>
    </location>
    <ligand>
        <name>Mg(2+)</name>
        <dbReference type="ChEBI" id="CHEBI:18420"/>
        <label>4</label>
    </ligand>
</feature>
<feature type="binding site" evidence="1">
    <location>
        <position position="832"/>
    </location>
    <ligand>
        <name>Mn(2+)</name>
        <dbReference type="ChEBI" id="CHEBI:29035"/>
        <label>3</label>
    </ligand>
</feature>
<feature type="binding site" evidence="1">
    <location>
        <position position="832"/>
    </location>
    <ligand>
        <name>Mn(2+)</name>
        <dbReference type="ChEBI" id="CHEBI:29035"/>
        <label>4</label>
    </ligand>
</feature>
<feature type="binding site" evidence="1">
    <location>
        <position position="834"/>
    </location>
    <ligand>
        <name>Mg(2+)</name>
        <dbReference type="ChEBI" id="CHEBI:18420"/>
        <label>4</label>
    </ligand>
</feature>
<feature type="binding site" evidence="1">
    <location>
        <position position="834"/>
    </location>
    <ligand>
        <name>Mn(2+)</name>
        <dbReference type="ChEBI" id="CHEBI:29035"/>
        <label>4</label>
    </ligand>
</feature>
<name>CARB_LACDB</name>
<gene>
    <name evidence="1" type="primary">carB</name>
    <name type="ordered locus">LBUL_1950</name>
</gene>
<keyword id="KW-0028">Amino-acid biosynthesis</keyword>
<keyword id="KW-0055">Arginine biosynthesis</keyword>
<keyword id="KW-0067">ATP-binding</keyword>
<keyword id="KW-0436">Ligase</keyword>
<keyword id="KW-0460">Magnesium</keyword>
<keyword id="KW-0464">Manganese</keyword>
<keyword id="KW-0479">Metal-binding</keyword>
<keyword id="KW-0547">Nucleotide-binding</keyword>
<keyword id="KW-0665">Pyrimidine biosynthesis</keyword>
<keyword id="KW-0677">Repeat</keyword>
<comment type="function">
    <text evidence="1">Large subunit of the glutamine-dependent carbamoyl phosphate synthetase (CPSase). CPSase catalyzes the formation of carbamoyl phosphate from the ammonia moiety of glutamine, carbonate, and phosphate donated by ATP, constituting the first step of 2 biosynthetic pathways, one leading to arginine and/or urea and the other to pyrimidine nucleotides. The large subunit (synthetase) binds the substrates ammonia (free or transferred from glutamine from the small subunit), hydrogencarbonate and ATP and carries out an ATP-coupled ligase reaction, activating hydrogencarbonate by forming carboxy phosphate which reacts with ammonia to form carbamoyl phosphate.</text>
</comment>
<comment type="catalytic activity">
    <reaction evidence="1">
        <text>hydrogencarbonate + L-glutamine + 2 ATP + H2O = carbamoyl phosphate + L-glutamate + 2 ADP + phosphate + 2 H(+)</text>
        <dbReference type="Rhea" id="RHEA:18633"/>
        <dbReference type="ChEBI" id="CHEBI:15377"/>
        <dbReference type="ChEBI" id="CHEBI:15378"/>
        <dbReference type="ChEBI" id="CHEBI:17544"/>
        <dbReference type="ChEBI" id="CHEBI:29985"/>
        <dbReference type="ChEBI" id="CHEBI:30616"/>
        <dbReference type="ChEBI" id="CHEBI:43474"/>
        <dbReference type="ChEBI" id="CHEBI:58228"/>
        <dbReference type="ChEBI" id="CHEBI:58359"/>
        <dbReference type="ChEBI" id="CHEBI:456216"/>
        <dbReference type="EC" id="6.3.5.5"/>
    </reaction>
</comment>
<comment type="catalytic activity">
    <molecule>Carbamoyl phosphate synthase large chain</molecule>
    <reaction evidence="1">
        <text>hydrogencarbonate + NH4(+) + 2 ATP = carbamoyl phosphate + 2 ADP + phosphate + 2 H(+)</text>
        <dbReference type="Rhea" id="RHEA:18029"/>
        <dbReference type="ChEBI" id="CHEBI:15378"/>
        <dbReference type="ChEBI" id="CHEBI:17544"/>
        <dbReference type="ChEBI" id="CHEBI:28938"/>
        <dbReference type="ChEBI" id="CHEBI:30616"/>
        <dbReference type="ChEBI" id="CHEBI:43474"/>
        <dbReference type="ChEBI" id="CHEBI:58228"/>
        <dbReference type="ChEBI" id="CHEBI:456216"/>
        <dbReference type="EC" id="6.3.4.16"/>
    </reaction>
</comment>
<comment type="cofactor">
    <cofactor evidence="1">
        <name>Mg(2+)</name>
        <dbReference type="ChEBI" id="CHEBI:18420"/>
    </cofactor>
    <cofactor evidence="1">
        <name>Mn(2+)</name>
        <dbReference type="ChEBI" id="CHEBI:29035"/>
    </cofactor>
    <text evidence="1">Binds 4 Mg(2+) or Mn(2+) ions per subunit.</text>
</comment>
<comment type="pathway">
    <text evidence="1">Amino-acid biosynthesis; L-arginine biosynthesis; carbamoyl phosphate from bicarbonate: step 1/1.</text>
</comment>
<comment type="pathway">
    <text evidence="1">Pyrimidine metabolism; UMP biosynthesis via de novo pathway; (S)-dihydroorotate from bicarbonate: step 1/3.</text>
</comment>
<comment type="subunit">
    <text evidence="1">Composed of two chains; the small (or glutamine) chain promotes the hydrolysis of glutamine to ammonia, which is used by the large (or ammonia) chain to synthesize carbamoyl phosphate. Tetramer of heterodimers (alpha,beta)4.</text>
</comment>
<comment type="domain">
    <text evidence="1">The large subunit is composed of 2 ATP-grasp domains that are involved in binding the 2 ATP molecules needed for carbamoyl phosphate synthesis. The N-terminal ATP-grasp domain (referred to as the carboxyphosphate synthetic component) catalyzes the ATP-dependent phosphorylation of hydrogencarbonate to carboxyphosphate and the subsequent nucleophilic attack by ammonia to form a carbamate intermediate. The C-terminal ATP-grasp domain (referred to as the carbamoyl phosphate synthetic component) then catalyzes the phosphorylation of carbamate with the second ATP to form the end product carbamoyl phosphate. The reactive and unstable enzyme intermediates are sequentially channeled from one active site to the next through the interior of the protein over a distance of at least 96 A.</text>
</comment>
<comment type="similarity">
    <text evidence="1">Belongs to the CarB family.</text>
</comment>
<protein>
    <recommendedName>
        <fullName evidence="1">Carbamoyl phosphate synthase large chain</fullName>
        <ecNumber evidence="1">6.3.4.16</ecNumber>
        <ecNumber evidence="1">6.3.5.5</ecNumber>
    </recommendedName>
    <alternativeName>
        <fullName evidence="1">Carbamoyl phosphate synthetase ammonia chain</fullName>
    </alternativeName>
</protein>
<evidence type="ECO:0000255" key="1">
    <source>
        <dbReference type="HAMAP-Rule" id="MF_01210"/>
    </source>
</evidence>
<proteinExistence type="inferred from homology"/>
<organism>
    <name type="scientific">Lactobacillus delbrueckii subsp. bulgaricus (strain ATCC BAA-365 / Lb-18)</name>
    <dbReference type="NCBI Taxonomy" id="321956"/>
    <lineage>
        <taxon>Bacteria</taxon>
        <taxon>Bacillati</taxon>
        <taxon>Bacillota</taxon>
        <taxon>Bacilli</taxon>
        <taxon>Lactobacillales</taxon>
        <taxon>Lactobacillaceae</taxon>
        <taxon>Lactobacillus</taxon>
    </lineage>
</organism>
<dbReference type="EC" id="6.3.4.16" evidence="1"/>
<dbReference type="EC" id="6.3.5.5" evidence="1"/>
<dbReference type="EMBL" id="CP000412">
    <property type="protein sequence ID" value="ABJ59344.1"/>
    <property type="molecule type" value="Genomic_DNA"/>
</dbReference>
<dbReference type="RefSeq" id="WP_011678670.1">
    <property type="nucleotide sequence ID" value="NC_008529.1"/>
</dbReference>
<dbReference type="SMR" id="Q047M8"/>
<dbReference type="KEGG" id="lbu:LBUL_1950"/>
<dbReference type="HOGENOM" id="CLU_000513_1_3_9"/>
<dbReference type="BioCyc" id="LDEL321956:LBUL_RS09210-MONOMER"/>
<dbReference type="UniPathway" id="UPA00068">
    <property type="reaction ID" value="UER00171"/>
</dbReference>
<dbReference type="UniPathway" id="UPA00070">
    <property type="reaction ID" value="UER00115"/>
</dbReference>
<dbReference type="GO" id="GO:0005737">
    <property type="term" value="C:cytoplasm"/>
    <property type="evidence" value="ECO:0007669"/>
    <property type="project" value="TreeGrafter"/>
</dbReference>
<dbReference type="GO" id="GO:0005524">
    <property type="term" value="F:ATP binding"/>
    <property type="evidence" value="ECO:0007669"/>
    <property type="project" value="UniProtKB-UniRule"/>
</dbReference>
<dbReference type="GO" id="GO:0004087">
    <property type="term" value="F:carbamoyl-phosphate synthase (ammonia) activity"/>
    <property type="evidence" value="ECO:0007669"/>
    <property type="project" value="RHEA"/>
</dbReference>
<dbReference type="GO" id="GO:0004088">
    <property type="term" value="F:carbamoyl-phosphate synthase (glutamine-hydrolyzing) activity"/>
    <property type="evidence" value="ECO:0007669"/>
    <property type="project" value="UniProtKB-UniRule"/>
</dbReference>
<dbReference type="GO" id="GO:0046872">
    <property type="term" value="F:metal ion binding"/>
    <property type="evidence" value="ECO:0007669"/>
    <property type="project" value="UniProtKB-KW"/>
</dbReference>
<dbReference type="GO" id="GO:0044205">
    <property type="term" value="P:'de novo' UMP biosynthetic process"/>
    <property type="evidence" value="ECO:0007669"/>
    <property type="project" value="UniProtKB-UniRule"/>
</dbReference>
<dbReference type="GO" id="GO:0006541">
    <property type="term" value="P:glutamine metabolic process"/>
    <property type="evidence" value="ECO:0007669"/>
    <property type="project" value="TreeGrafter"/>
</dbReference>
<dbReference type="GO" id="GO:0006526">
    <property type="term" value="P:L-arginine biosynthetic process"/>
    <property type="evidence" value="ECO:0007669"/>
    <property type="project" value="UniProtKB-UniRule"/>
</dbReference>
<dbReference type="CDD" id="cd01424">
    <property type="entry name" value="MGS_CPS_II"/>
    <property type="match status" value="1"/>
</dbReference>
<dbReference type="FunFam" id="1.10.1030.10:FF:000002">
    <property type="entry name" value="Carbamoyl-phosphate synthase large chain"/>
    <property type="match status" value="1"/>
</dbReference>
<dbReference type="FunFam" id="3.30.1490.20:FF:000001">
    <property type="entry name" value="Carbamoyl-phosphate synthase large chain"/>
    <property type="match status" value="1"/>
</dbReference>
<dbReference type="FunFam" id="3.30.470.20:FF:000001">
    <property type="entry name" value="Carbamoyl-phosphate synthase large chain"/>
    <property type="match status" value="1"/>
</dbReference>
<dbReference type="FunFam" id="3.30.470.20:FF:000026">
    <property type="entry name" value="Carbamoyl-phosphate synthase large chain"/>
    <property type="match status" value="1"/>
</dbReference>
<dbReference type="FunFam" id="3.40.50.20:FF:000001">
    <property type="entry name" value="Carbamoyl-phosphate synthase large chain"/>
    <property type="match status" value="1"/>
</dbReference>
<dbReference type="FunFam" id="3.40.50.20:FF:000002">
    <property type="entry name" value="Carbamoyl-phosphate synthase large chain"/>
    <property type="match status" value="1"/>
</dbReference>
<dbReference type="Gene3D" id="3.40.50.20">
    <property type="match status" value="2"/>
</dbReference>
<dbReference type="Gene3D" id="3.30.470.20">
    <property type="entry name" value="ATP-grasp fold, B domain"/>
    <property type="match status" value="2"/>
</dbReference>
<dbReference type="Gene3D" id="1.10.1030.10">
    <property type="entry name" value="Carbamoyl-phosphate synthetase, large subunit oligomerisation domain"/>
    <property type="match status" value="1"/>
</dbReference>
<dbReference type="Gene3D" id="3.40.50.1380">
    <property type="entry name" value="Methylglyoxal synthase-like domain"/>
    <property type="match status" value="1"/>
</dbReference>
<dbReference type="HAMAP" id="MF_01210_A">
    <property type="entry name" value="CPSase_L_chain_A"/>
    <property type="match status" value="1"/>
</dbReference>
<dbReference type="HAMAP" id="MF_01210_B">
    <property type="entry name" value="CPSase_L_chain_B"/>
    <property type="match status" value="1"/>
</dbReference>
<dbReference type="InterPro" id="IPR011761">
    <property type="entry name" value="ATP-grasp"/>
</dbReference>
<dbReference type="InterPro" id="IPR006275">
    <property type="entry name" value="CarbamoylP_synth_lsu"/>
</dbReference>
<dbReference type="InterPro" id="IPR005480">
    <property type="entry name" value="CarbamoylP_synth_lsu_oligo"/>
</dbReference>
<dbReference type="InterPro" id="IPR036897">
    <property type="entry name" value="CarbamoylP_synth_lsu_oligo_sf"/>
</dbReference>
<dbReference type="InterPro" id="IPR005479">
    <property type="entry name" value="CbamoylP_synth_lsu-like_ATP-bd"/>
</dbReference>
<dbReference type="InterPro" id="IPR005483">
    <property type="entry name" value="CbamoylP_synth_lsu_CPSase_dom"/>
</dbReference>
<dbReference type="InterPro" id="IPR011607">
    <property type="entry name" value="MGS-like_dom"/>
</dbReference>
<dbReference type="InterPro" id="IPR036914">
    <property type="entry name" value="MGS-like_dom_sf"/>
</dbReference>
<dbReference type="InterPro" id="IPR033937">
    <property type="entry name" value="MGS_CPS_CarB"/>
</dbReference>
<dbReference type="InterPro" id="IPR016185">
    <property type="entry name" value="PreATP-grasp_dom_sf"/>
</dbReference>
<dbReference type="NCBIfam" id="TIGR01369">
    <property type="entry name" value="CPSaseII_lrg"/>
    <property type="match status" value="1"/>
</dbReference>
<dbReference type="NCBIfam" id="NF003671">
    <property type="entry name" value="PRK05294.1"/>
    <property type="match status" value="1"/>
</dbReference>
<dbReference type="NCBIfam" id="NF009455">
    <property type="entry name" value="PRK12815.1"/>
    <property type="match status" value="1"/>
</dbReference>
<dbReference type="PANTHER" id="PTHR11405:SF53">
    <property type="entry name" value="CARBAMOYL-PHOSPHATE SYNTHASE [AMMONIA], MITOCHONDRIAL"/>
    <property type="match status" value="1"/>
</dbReference>
<dbReference type="PANTHER" id="PTHR11405">
    <property type="entry name" value="CARBAMOYLTRANSFERASE FAMILY MEMBER"/>
    <property type="match status" value="1"/>
</dbReference>
<dbReference type="Pfam" id="PF02786">
    <property type="entry name" value="CPSase_L_D2"/>
    <property type="match status" value="2"/>
</dbReference>
<dbReference type="Pfam" id="PF02787">
    <property type="entry name" value="CPSase_L_D3"/>
    <property type="match status" value="1"/>
</dbReference>
<dbReference type="Pfam" id="PF02142">
    <property type="entry name" value="MGS"/>
    <property type="match status" value="1"/>
</dbReference>
<dbReference type="PRINTS" id="PR00098">
    <property type="entry name" value="CPSASE"/>
</dbReference>
<dbReference type="SMART" id="SM01096">
    <property type="entry name" value="CPSase_L_D3"/>
    <property type="match status" value="1"/>
</dbReference>
<dbReference type="SMART" id="SM01209">
    <property type="entry name" value="GARS_A"/>
    <property type="match status" value="1"/>
</dbReference>
<dbReference type="SMART" id="SM00851">
    <property type="entry name" value="MGS"/>
    <property type="match status" value="1"/>
</dbReference>
<dbReference type="SUPFAM" id="SSF48108">
    <property type="entry name" value="Carbamoyl phosphate synthetase, large subunit connection domain"/>
    <property type="match status" value="1"/>
</dbReference>
<dbReference type="SUPFAM" id="SSF56059">
    <property type="entry name" value="Glutathione synthetase ATP-binding domain-like"/>
    <property type="match status" value="2"/>
</dbReference>
<dbReference type="SUPFAM" id="SSF52335">
    <property type="entry name" value="Methylglyoxal synthase-like"/>
    <property type="match status" value="1"/>
</dbReference>
<dbReference type="SUPFAM" id="SSF52440">
    <property type="entry name" value="PreATP-grasp domain"/>
    <property type="match status" value="2"/>
</dbReference>
<dbReference type="PROSITE" id="PS50975">
    <property type="entry name" value="ATP_GRASP"/>
    <property type="match status" value="2"/>
</dbReference>
<dbReference type="PROSITE" id="PS00866">
    <property type="entry name" value="CPSASE_1"/>
    <property type="match status" value="2"/>
</dbReference>
<dbReference type="PROSITE" id="PS00867">
    <property type="entry name" value="CPSASE_2"/>
    <property type="match status" value="2"/>
</dbReference>
<dbReference type="PROSITE" id="PS51855">
    <property type="entry name" value="MGS"/>
    <property type="match status" value="1"/>
</dbReference>
<reference key="1">
    <citation type="journal article" date="2006" name="Proc. Natl. Acad. Sci. U.S.A.">
        <title>Comparative genomics of the lactic acid bacteria.</title>
        <authorList>
            <person name="Makarova K.S."/>
            <person name="Slesarev A."/>
            <person name="Wolf Y.I."/>
            <person name="Sorokin A."/>
            <person name="Mirkin B."/>
            <person name="Koonin E.V."/>
            <person name="Pavlov A."/>
            <person name="Pavlova N."/>
            <person name="Karamychev V."/>
            <person name="Polouchine N."/>
            <person name="Shakhova V."/>
            <person name="Grigoriev I."/>
            <person name="Lou Y."/>
            <person name="Rohksar D."/>
            <person name="Lucas S."/>
            <person name="Huang K."/>
            <person name="Goodstein D.M."/>
            <person name="Hawkins T."/>
            <person name="Plengvidhya V."/>
            <person name="Welker D."/>
            <person name="Hughes J."/>
            <person name="Goh Y."/>
            <person name="Benson A."/>
            <person name="Baldwin K."/>
            <person name="Lee J.-H."/>
            <person name="Diaz-Muniz I."/>
            <person name="Dosti B."/>
            <person name="Smeianov V."/>
            <person name="Wechter W."/>
            <person name="Barabote R."/>
            <person name="Lorca G."/>
            <person name="Altermann E."/>
            <person name="Barrangou R."/>
            <person name="Ganesan B."/>
            <person name="Xie Y."/>
            <person name="Rawsthorne H."/>
            <person name="Tamir D."/>
            <person name="Parker C."/>
            <person name="Breidt F."/>
            <person name="Broadbent J.R."/>
            <person name="Hutkins R."/>
            <person name="O'Sullivan D."/>
            <person name="Steele J."/>
            <person name="Unlu G."/>
            <person name="Saier M.H. Jr."/>
            <person name="Klaenhammer T."/>
            <person name="Richardson P."/>
            <person name="Kozyavkin S."/>
            <person name="Weimer B.C."/>
            <person name="Mills D.A."/>
        </authorList>
    </citation>
    <scope>NUCLEOTIDE SEQUENCE [LARGE SCALE GENOMIC DNA]</scope>
    <source>
        <strain>ATCC BAA-365 / Lb-18</strain>
    </source>
</reference>